<reference key="1">
    <citation type="journal article" date="1997" name="DNA Res.">
        <title>Structural analysis of Arabidopsis thaliana chromosome 5. III. Sequence features of the regions of 1,191,918 bp covered by seventeen physically assigned P1 clones.</title>
        <authorList>
            <person name="Nakamura Y."/>
            <person name="Sato S."/>
            <person name="Kaneko T."/>
            <person name="Kotani H."/>
            <person name="Asamizu E."/>
            <person name="Miyajima N."/>
            <person name="Tabata S."/>
        </authorList>
    </citation>
    <scope>NUCLEOTIDE SEQUENCE [LARGE SCALE GENOMIC DNA]</scope>
    <source>
        <strain>cv. Columbia</strain>
    </source>
</reference>
<reference key="2">
    <citation type="journal article" date="2017" name="Plant J.">
        <title>Araport11: a complete reannotation of the Arabidopsis thaliana reference genome.</title>
        <authorList>
            <person name="Cheng C.Y."/>
            <person name="Krishnakumar V."/>
            <person name="Chan A.P."/>
            <person name="Thibaud-Nissen F."/>
            <person name="Schobel S."/>
            <person name="Town C.D."/>
        </authorList>
    </citation>
    <scope>GENOME REANNOTATION</scope>
    <source>
        <strain>cv. Columbia</strain>
    </source>
</reference>
<reference key="3">
    <citation type="submission" date="2004-11" db="EMBL/GenBank/DDBJ databases">
        <title>Arabidopsis ORF clones.</title>
        <authorList>
            <person name="Shinn P."/>
            <person name="Chen H."/>
            <person name="Cheuk R.F."/>
            <person name="Kim C.J."/>
            <person name="Ecker J.R."/>
        </authorList>
    </citation>
    <scope>NUCLEOTIDE SEQUENCE [LARGE SCALE MRNA]</scope>
    <source>
        <strain>cv. Columbia</strain>
    </source>
</reference>
<reference key="4">
    <citation type="submission" date="2006-07" db="EMBL/GenBank/DDBJ databases">
        <title>Large-scale analysis of RIKEN Arabidopsis full-length (RAFL) cDNAs.</title>
        <authorList>
            <person name="Totoki Y."/>
            <person name="Seki M."/>
            <person name="Ishida J."/>
            <person name="Nakajima M."/>
            <person name="Enju A."/>
            <person name="Kamiya A."/>
            <person name="Narusaka M."/>
            <person name="Shin-i T."/>
            <person name="Nakagawa M."/>
            <person name="Sakamoto N."/>
            <person name="Oishi K."/>
            <person name="Kohara Y."/>
            <person name="Kobayashi M."/>
            <person name="Toyoda A."/>
            <person name="Sakaki Y."/>
            <person name="Sakurai T."/>
            <person name="Iida K."/>
            <person name="Akiyama K."/>
            <person name="Satou M."/>
            <person name="Toyoda T."/>
            <person name="Konagaya A."/>
            <person name="Carninci P."/>
            <person name="Kawai J."/>
            <person name="Hayashizaki Y."/>
            <person name="Shinozaki K."/>
        </authorList>
    </citation>
    <scope>NUCLEOTIDE SEQUENCE [LARGE SCALE MRNA] OF 519-707</scope>
    <source>
        <strain>cv. Columbia</strain>
    </source>
</reference>
<reference key="5">
    <citation type="journal article" date="2001" name="Trends Plant Sci.">
        <title>The U-box protein family in plants.</title>
        <authorList>
            <person name="Azevedo C."/>
            <person name="Santos-Rosa M.J."/>
            <person name="Shirasu K."/>
        </authorList>
    </citation>
    <scope>GENE FAMILY ORGANIZATION</scope>
    <scope>NOMENCLATURE</scope>
</reference>
<reference key="6">
    <citation type="journal article" date="2004" name="Plant Physiol.">
        <title>A large complement of the predicted Arabidopsis ARM repeat proteins are members of the U-box E3 ubiquitin ligase family.</title>
        <authorList>
            <person name="Mudgil Y."/>
            <person name="Shiu S.-H."/>
            <person name="Stone S.L."/>
            <person name="Salt J.N."/>
            <person name="Goring D.R."/>
        </authorList>
    </citation>
    <scope>GENE FAMILY ORGANIZATION</scope>
</reference>
<dbReference type="EC" id="2.3.2.27"/>
<dbReference type="EMBL" id="AB007645">
    <property type="protein sequence ID" value="BAB09019.1"/>
    <property type="status" value="ALT_SEQ"/>
    <property type="molecule type" value="Genomic_DNA"/>
</dbReference>
<dbReference type="EMBL" id="CP002688">
    <property type="protein sequence ID" value="AED98330.1"/>
    <property type="molecule type" value="Genomic_DNA"/>
</dbReference>
<dbReference type="EMBL" id="CP002688">
    <property type="protein sequence ID" value="ANM70639.1"/>
    <property type="molecule type" value="Genomic_DNA"/>
</dbReference>
<dbReference type="EMBL" id="BT015818">
    <property type="protein sequence ID" value="AAU94381.1"/>
    <property type="molecule type" value="mRNA"/>
</dbReference>
<dbReference type="EMBL" id="BT020206">
    <property type="protein sequence ID" value="AAV59272.1"/>
    <property type="molecule type" value="mRNA"/>
</dbReference>
<dbReference type="EMBL" id="AK229487">
    <property type="protein sequence ID" value="BAF01345.1"/>
    <property type="molecule type" value="mRNA"/>
</dbReference>
<dbReference type="RefSeq" id="NP_001332230.1">
    <property type="nucleotide sequence ID" value="NM_001345821.1"/>
</dbReference>
<dbReference type="RefSeq" id="NP_201535.3">
    <property type="nucleotide sequence ID" value="NM_126134.5"/>
</dbReference>
<dbReference type="SMR" id="Q5XEZ8"/>
<dbReference type="FunCoup" id="Q5XEZ8">
    <property type="interactions" value="5"/>
</dbReference>
<dbReference type="STRING" id="3702.Q5XEZ8"/>
<dbReference type="GlyGen" id="Q5XEZ8">
    <property type="glycosylation" value="1 site"/>
</dbReference>
<dbReference type="iPTMnet" id="Q5XEZ8"/>
<dbReference type="PaxDb" id="3702-AT5G67340.1"/>
<dbReference type="ProteomicsDB" id="226107"/>
<dbReference type="EnsemblPlants" id="AT5G67340.1">
    <property type="protein sequence ID" value="AT5G67340.1"/>
    <property type="gene ID" value="AT5G67340"/>
</dbReference>
<dbReference type="EnsemblPlants" id="AT5G67340.2">
    <property type="protein sequence ID" value="AT5G67340.2"/>
    <property type="gene ID" value="AT5G67340"/>
</dbReference>
<dbReference type="GeneID" id="836869"/>
<dbReference type="Gramene" id="AT5G67340.1">
    <property type="protein sequence ID" value="AT5G67340.1"/>
    <property type="gene ID" value="AT5G67340"/>
</dbReference>
<dbReference type="Gramene" id="AT5G67340.2">
    <property type="protein sequence ID" value="AT5G67340.2"/>
    <property type="gene ID" value="AT5G67340"/>
</dbReference>
<dbReference type="KEGG" id="ath:AT5G67340"/>
<dbReference type="Araport" id="AT5G67340"/>
<dbReference type="TAIR" id="AT5G67340">
    <property type="gene designation" value="PUB2"/>
</dbReference>
<dbReference type="eggNOG" id="KOG0167">
    <property type="taxonomic scope" value="Eukaryota"/>
</dbReference>
<dbReference type="HOGENOM" id="CLU_006348_5_0_1"/>
<dbReference type="InParanoid" id="Q5XEZ8"/>
<dbReference type="OMA" id="IHHENKT"/>
<dbReference type="OrthoDB" id="7537227at2759"/>
<dbReference type="PhylomeDB" id="Q5XEZ8"/>
<dbReference type="UniPathway" id="UPA00143"/>
<dbReference type="PRO" id="PR:Q5XEZ8"/>
<dbReference type="Proteomes" id="UP000006548">
    <property type="component" value="Chromosome 5"/>
</dbReference>
<dbReference type="ExpressionAtlas" id="Q5XEZ8">
    <property type="expression patterns" value="baseline and differential"/>
</dbReference>
<dbReference type="GO" id="GO:0004842">
    <property type="term" value="F:ubiquitin-protein transferase activity"/>
    <property type="evidence" value="ECO:0007669"/>
    <property type="project" value="InterPro"/>
</dbReference>
<dbReference type="GO" id="GO:0016567">
    <property type="term" value="P:protein ubiquitination"/>
    <property type="evidence" value="ECO:0007669"/>
    <property type="project" value="UniProtKB-UniPathway"/>
</dbReference>
<dbReference type="CDD" id="cd16664">
    <property type="entry name" value="RING-Ubox_PUB"/>
    <property type="match status" value="1"/>
</dbReference>
<dbReference type="FunFam" id="1.25.10.10:FF:000082">
    <property type="entry name" value="RING-type E3 ubiquitin transferase"/>
    <property type="match status" value="1"/>
</dbReference>
<dbReference type="Gene3D" id="1.25.10.10">
    <property type="entry name" value="Leucine-rich Repeat Variant"/>
    <property type="match status" value="2"/>
</dbReference>
<dbReference type="Gene3D" id="3.30.40.10">
    <property type="entry name" value="Zinc/RING finger domain, C3HC4 (zinc finger)"/>
    <property type="match status" value="1"/>
</dbReference>
<dbReference type="InterPro" id="IPR011989">
    <property type="entry name" value="ARM-like"/>
</dbReference>
<dbReference type="InterPro" id="IPR016024">
    <property type="entry name" value="ARM-type_fold"/>
</dbReference>
<dbReference type="InterPro" id="IPR000225">
    <property type="entry name" value="Armadillo"/>
</dbReference>
<dbReference type="InterPro" id="IPR045210">
    <property type="entry name" value="RING-Ubox_PUB"/>
</dbReference>
<dbReference type="InterPro" id="IPR003613">
    <property type="entry name" value="Ubox_domain"/>
</dbReference>
<dbReference type="InterPro" id="IPR013083">
    <property type="entry name" value="Znf_RING/FYVE/PHD"/>
</dbReference>
<dbReference type="PANTHER" id="PTHR23315">
    <property type="entry name" value="U BOX DOMAIN-CONTAINING"/>
    <property type="match status" value="1"/>
</dbReference>
<dbReference type="PANTHER" id="PTHR23315:SF263">
    <property type="entry name" value="U-BOX DOMAIN-CONTAINING PROTEIN 2"/>
    <property type="match status" value="1"/>
</dbReference>
<dbReference type="Pfam" id="PF00514">
    <property type="entry name" value="Arm"/>
    <property type="match status" value="2"/>
</dbReference>
<dbReference type="Pfam" id="PF25240">
    <property type="entry name" value="PUB2_N"/>
    <property type="match status" value="1"/>
</dbReference>
<dbReference type="Pfam" id="PF04564">
    <property type="entry name" value="U-box"/>
    <property type="match status" value="1"/>
</dbReference>
<dbReference type="SMART" id="SM00185">
    <property type="entry name" value="ARM"/>
    <property type="match status" value="5"/>
</dbReference>
<dbReference type="SMART" id="SM00504">
    <property type="entry name" value="Ubox"/>
    <property type="match status" value="1"/>
</dbReference>
<dbReference type="SUPFAM" id="SSF48371">
    <property type="entry name" value="ARM repeat"/>
    <property type="match status" value="1"/>
</dbReference>
<dbReference type="SUPFAM" id="SSF57850">
    <property type="entry name" value="RING/U-box"/>
    <property type="match status" value="1"/>
</dbReference>
<dbReference type="PROSITE" id="PS50176">
    <property type="entry name" value="ARM_REPEAT"/>
    <property type="match status" value="3"/>
</dbReference>
<dbReference type="PROSITE" id="PS51698">
    <property type="entry name" value="U_BOX"/>
    <property type="match status" value="1"/>
</dbReference>
<accession>Q5XEZ8</accession>
<accession>Q0WNF4</accession>
<accession>Q9FN17</accession>
<name>PUB2_ARATH</name>
<protein>
    <recommendedName>
        <fullName>U-box domain-containing protein 2</fullName>
        <ecNumber>2.3.2.27</ecNumber>
    </recommendedName>
    <alternativeName>
        <fullName>Plant U-box protein 2</fullName>
    </alternativeName>
    <alternativeName>
        <fullName evidence="2">RING-type E3 ubiquitin transferase PUB2</fullName>
    </alternativeName>
</protein>
<sequence>MMVHMEVSWLRVLLDNISSYLSLSSMDDLSSNPAHKYYTRGEDIGKLIKPVLENLIDSDAAPSELLNNGFEELAQYVDELREQFQSWQPLSTRIFYVLRIESLASKLRESSLEVFQLLKHCEQHLPADLISPSFEECIELVKLVARDEISYTIDQALKDQKKGVGPTSEVLVKIAESTGLRSNQEILVEGVVLTNMKEDAELTDNDTEAEYLDGLISLTTQMHEYLSDIKQAQLRCPVRVPSDFRCSLSLELMTDPVIVASGQTFERVFIQKWIDMGLMVCPKTRQALSHTTLTPNFIVRAFLASWCETNNVYPPDPLELIHSSEPFPLLVESVRASSSENGHSESLDAEELRQVFSRSASAPGIVSEVVCKTKRNNNAAADRSLTRSNTPWKFPEERHWRHPGIIPATVRETGSSSSIETEVKKLIDDLKSSSLDTQREATARIRILARNSTDNRIVIARCEAIPSLVSLLYSTDERIQADAVTCLLNLSINDNNKSLIAESGAIVPLIHVLKTGYLEEAKANSAATLFSLSVIEEYKTEIGEAGAIEPLVDLLGSGSLSGKKDAATALFNLSIHHENKTKVIEAGAVRYLVELMDPAFGMVEKAVVVLANLATVREGKIAIGEEGGIPVLVEVVELGSARGKENATAALLQLCTHSPKFCNNVIREGVIPPLVALTKSGTARGKEKAQNLLKYFKAHRQSNQRRG</sequence>
<keyword id="KW-1185">Reference proteome</keyword>
<keyword id="KW-0677">Repeat</keyword>
<keyword id="KW-0808">Transferase</keyword>
<keyword id="KW-0833">Ubl conjugation pathway</keyword>
<gene>
    <name type="primary">PUB2</name>
    <name type="ordered locus">At5g67340</name>
    <name type="ORF">K8K14.6</name>
</gene>
<organism>
    <name type="scientific">Arabidopsis thaliana</name>
    <name type="common">Mouse-ear cress</name>
    <dbReference type="NCBI Taxonomy" id="3702"/>
    <lineage>
        <taxon>Eukaryota</taxon>
        <taxon>Viridiplantae</taxon>
        <taxon>Streptophyta</taxon>
        <taxon>Embryophyta</taxon>
        <taxon>Tracheophyta</taxon>
        <taxon>Spermatophyta</taxon>
        <taxon>Magnoliopsida</taxon>
        <taxon>eudicotyledons</taxon>
        <taxon>Gunneridae</taxon>
        <taxon>Pentapetalae</taxon>
        <taxon>rosids</taxon>
        <taxon>malvids</taxon>
        <taxon>Brassicales</taxon>
        <taxon>Brassicaceae</taxon>
        <taxon>Camelineae</taxon>
        <taxon>Arabidopsis</taxon>
    </lineage>
</organism>
<feature type="chain" id="PRO_0000322148" description="U-box domain-containing protein 2">
    <location>
        <begin position="1"/>
        <end position="707"/>
    </location>
</feature>
<feature type="domain" description="U-box">
    <location>
        <begin position="239"/>
        <end position="313"/>
    </location>
</feature>
<feature type="repeat" description="ARM 1">
    <location>
        <begin position="453"/>
        <end position="492"/>
    </location>
</feature>
<feature type="repeat" description="ARM 2">
    <location>
        <begin position="494"/>
        <end position="534"/>
    </location>
</feature>
<feature type="repeat" description="ARM 3">
    <location>
        <begin position="536"/>
        <end position="575"/>
    </location>
</feature>
<feature type="repeat" description="ARM 4">
    <location>
        <begin position="577"/>
        <end position="615"/>
    </location>
</feature>
<feature type="repeat" description="ARM 5">
    <location>
        <begin position="617"/>
        <end position="656"/>
    </location>
</feature>
<feature type="sequence conflict" description="In Ref. 4; BAF01345." evidence="2" ref="4">
    <original>A</original>
    <variation>P</variation>
    <location>
        <position position="521"/>
    </location>
</feature>
<evidence type="ECO:0000250" key="1"/>
<evidence type="ECO:0000305" key="2"/>
<proteinExistence type="evidence at transcript level"/>
<comment type="function">
    <text evidence="1">Functions as an E3 ubiquitin ligase.</text>
</comment>
<comment type="catalytic activity">
    <reaction>
        <text>S-ubiquitinyl-[E2 ubiquitin-conjugating enzyme]-L-cysteine + [acceptor protein]-L-lysine = [E2 ubiquitin-conjugating enzyme]-L-cysteine + N(6)-ubiquitinyl-[acceptor protein]-L-lysine.</text>
        <dbReference type="EC" id="2.3.2.27"/>
    </reaction>
</comment>
<comment type="pathway">
    <text>Protein modification; protein ubiquitination.</text>
</comment>
<comment type="sequence caution" evidence="2">
    <conflict type="erroneous gene model prediction">
        <sequence resource="EMBL-CDS" id="BAB09019"/>
    </conflict>
</comment>